<keyword id="KW-0119">Carbohydrate metabolism</keyword>
<keyword id="KW-0320">Glycogen biosynthesis</keyword>
<keyword id="KW-0321">Glycogen metabolism</keyword>
<keyword id="KW-0328">Glycosyltransferase</keyword>
<keyword id="KW-1185">Reference proteome</keyword>
<keyword id="KW-0808">Transferase</keyword>
<proteinExistence type="inferred from homology"/>
<gene>
    <name evidence="1" type="primary">glgB</name>
    <name type="ordered locus">Jann_3113</name>
</gene>
<sequence>MSCPYPFKVFSCTVSRHSHQAACVVAKTQATSQPRGALSPGGGFLAALALSVTGWRIGSKGHIVAQKTSTPPPDTIQAGDMITDFDQYLLGEGTHRQLWRVLGAHVQDDATHFAVWAPNARAVSVTGDFNGWSGTEMTAVGQTGVWQVRIPGVGDGALYKYQITDANGALREKADPVGFGAQHPPEQASVVRDIRGYGWRDGAWMETRAEAADRAAPISIYEVHLGSWRRKWDDGGRPLSYKEAAQDLVGYVRHMGFTHIELMPISEFPFDGSWGYQPVGLYAPTIRFGPPHEFRDLVDAAHAAGLGVLLDWVPGHFPTDEHGLATFDGTHLYEHADPKEGFHQDWNTLIFNYGRTEVRNYLVANALYWMEEYHLDGLRVDAVASMLYRDYSRDEGQWVPNKDGGRENLEAISFLQEMNVAVYGADASVMTVAEESTSFPGVSQPVHTGGLGFGYKWNMGWMNDTLSYMALDPIHRQHHHSQMTNPIMWQYSENFILPISHDEVVHGKGSMLEKMPGNDWEKLANLRAYYGYMWMHPGKKLIFMGCEFAQPGEWSHDGDLNWDAASRPAHAGVQALVRDLNHLYRDTPALHVKDCMPDGFAWICNDPAQSTLGFARFGAAGDAPVVVMCNFTPVERVAFRMGVPTPGEWDEVLNTDAAAYGGGNRGNLGGVLSEPTPCDGHAQSVTLTLPPLSTVVLRLKD</sequence>
<protein>
    <recommendedName>
        <fullName evidence="1">1,4-alpha-glucan branching enzyme GlgB</fullName>
        <ecNumber evidence="1">2.4.1.18</ecNumber>
    </recommendedName>
    <alternativeName>
        <fullName evidence="1">1,4-alpha-D-glucan:1,4-alpha-D-glucan 6-glucosyl-transferase</fullName>
    </alternativeName>
    <alternativeName>
        <fullName evidence="1">Alpha-(1-&gt;4)-glucan branching enzyme</fullName>
    </alternativeName>
    <alternativeName>
        <fullName evidence="1">Glycogen branching enzyme</fullName>
        <shortName evidence="1">BE</shortName>
    </alternativeName>
</protein>
<accession>Q28MN2</accession>
<feature type="chain" id="PRO_0000260662" description="1,4-alpha-glucan branching enzyme GlgB">
    <location>
        <begin position="1"/>
        <end position="701"/>
    </location>
</feature>
<feature type="active site" description="Nucleophile" evidence="1">
    <location>
        <position position="381"/>
    </location>
</feature>
<feature type="active site" description="Proton donor" evidence="1">
    <location>
        <position position="434"/>
    </location>
</feature>
<name>GLGB_JANSC</name>
<dbReference type="EC" id="2.4.1.18" evidence="1"/>
<dbReference type="EMBL" id="CP000264">
    <property type="protein sequence ID" value="ABD56030.1"/>
    <property type="status" value="ALT_INIT"/>
    <property type="molecule type" value="Genomic_DNA"/>
</dbReference>
<dbReference type="SMR" id="Q28MN2"/>
<dbReference type="STRING" id="290400.Jann_3113"/>
<dbReference type="CAZy" id="CBM48">
    <property type="family name" value="Carbohydrate-Binding Module Family 48"/>
</dbReference>
<dbReference type="CAZy" id="GH13">
    <property type="family name" value="Glycoside Hydrolase Family 13"/>
</dbReference>
<dbReference type="KEGG" id="jan:Jann_3113"/>
<dbReference type="eggNOG" id="COG0296">
    <property type="taxonomic scope" value="Bacteria"/>
</dbReference>
<dbReference type="HOGENOM" id="CLU_004245_3_2_5"/>
<dbReference type="OrthoDB" id="9800174at2"/>
<dbReference type="UniPathway" id="UPA00164"/>
<dbReference type="Proteomes" id="UP000008326">
    <property type="component" value="Chromosome"/>
</dbReference>
<dbReference type="GO" id="GO:0005829">
    <property type="term" value="C:cytosol"/>
    <property type="evidence" value="ECO:0007669"/>
    <property type="project" value="TreeGrafter"/>
</dbReference>
<dbReference type="GO" id="GO:0003844">
    <property type="term" value="F:1,4-alpha-glucan branching enzyme activity"/>
    <property type="evidence" value="ECO:0007669"/>
    <property type="project" value="UniProtKB-UniRule"/>
</dbReference>
<dbReference type="GO" id="GO:0043169">
    <property type="term" value="F:cation binding"/>
    <property type="evidence" value="ECO:0007669"/>
    <property type="project" value="InterPro"/>
</dbReference>
<dbReference type="GO" id="GO:0004553">
    <property type="term" value="F:hydrolase activity, hydrolyzing O-glycosyl compounds"/>
    <property type="evidence" value="ECO:0007669"/>
    <property type="project" value="InterPro"/>
</dbReference>
<dbReference type="GO" id="GO:0005978">
    <property type="term" value="P:glycogen biosynthetic process"/>
    <property type="evidence" value="ECO:0007669"/>
    <property type="project" value="UniProtKB-UniRule"/>
</dbReference>
<dbReference type="CDD" id="cd11322">
    <property type="entry name" value="AmyAc_Glg_BE"/>
    <property type="match status" value="1"/>
</dbReference>
<dbReference type="CDD" id="cd02855">
    <property type="entry name" value="E_set_GBE_prok_N"/>
    <property type="match status" value="1"/>
</dbReference>
<dbReference type="FunFam" id="2.60.40.1180:FF:000002">
    <property type="entry name" value="1,4-alpha-glucan branching enzyme GlgB"/>
    <property type="match status" value="1"/>
</dbReference>
<dbReference type="FunFam" id="3.20.20.80:FF:000003">
    <property type="entry name" value="1,4-alpha-glucan branching enzyme GlgB"/>
    <property type="match status" value="1"/>
</dbReference>
<dbReference type="Gene3D" id="3.20.20.80">
    <property type="entry name" value="Glycosidases"/>
    <property type="match status" value="1"/>
</dbReference>
<dbReference type="Gene3D" id="2.60.40.1180">
    <property type="entry name" value="Golgi alpha-mannosidase II"/>
    <property type="match status" value="1"/>
</dbReference>
<dbReference type="Gene3D" id="2.60.40.10">
    <property type="entry name" value="Immunoglobulins"/>
    <property type="match status" value="1"/>
</dbReference>
<dbReference type="HAMAP" id="MF_00685">
    <property type="entry name" value="GlgB"/>
    <property type="match status" value="1"/>
</dbReference>
<dbReference type="InterPro" id="IPR006048">
    <property type="entry name" value="A-amylase/branching_C"/>
</dbReference>
<dbReference type="InterPro" id="IPR037439">
    <property type="entry name" value="Branching_enzy"/>
</dbReference>
<dbReference type="InterPro" id="IPR006407">
    <property type="entry name" value="GlgB"/>
</dbReference>
<dbReference type="InterPro" id="IPR044143">
    <property type="entry name" value="GlgB_N_E_set_prok"/>
</dbReference>
<dbReference type="InterPro" id="IPR006047">
    <property type="entry name" value="Glyco_hydro_13_cat_dom"/>
</dbReference>
<dbReference type="InterPro" id="IPR004193">
    <property type="entry name" value="Glyco_hydro_13_N"/>
</dbReference>
<dbReference type="InterPro" id="IPR013780">
    <property type="entry name" value="Glyco_hydro_b"/>
</dbReference>
<dbReference type="InterPro" id="IPR017853">
    <property type="entry name" value="Glycoside_hydrolase_SF"/>
</dbReference>
<dbReference type="InterPro" id="IPR013783">
    <property type="entry name" value="Ig-like_fold"/>
</dbReference>
<dbReference type="InterPro" id="IPR014756">
    <property type="entry name" value="Ig_E-set"/>
</dbReference>
<dbReference type="NCBIfam" id="TIGR01515">
    <property type="entry name" value="branching_enzym"/>
    <property type="match status" value="1"/>
</dbReference>
<dbReference type="NCBIfam" id="NF003811">
    <property type="entry name" value="PRK05402.1"/>
    <property type="match status" value="1"/>
</dbReference>
<dbReference type="NCBIfam" id="NF008967">
    <property type="entry name" value="PRK12313.1"/>
    <property type="match status" value="1"/>
</dbReference>
<dbReference type="PANTHER" id="PTHR43651">
    <property type="entry name" value="1,4-ALPHA-GLUCAN-BRANCHING ENZYME"/>
    <property type="match status" value="1"/>
</dbReference>
<dbReference type="PANTHER" id="PTHR43651:SF3">
    <property type="entry name" value="1,4-ALPHA-GLUCAN-BRANCHING ENZYME"/>
    <property type="match status" value="1"/>
</dbReference>
<dbReference type="Pfam" id="PF00128">
    <property type="entry name" value="Alpha-amylase"/>
    <property type="match status" value="2"/>
</dbReference>
<dbReference type="Pfam" id="PF02806">
    <property type="entry name" value="Alpha-amylase_C"/>
    <property type="match status" value="1"/>
</dbReference>
<dbReference type="Pfam" id="PF02922">
    <property type="entry name" value="CBM_48"/>
    <property type="match status" value="1"/>
</dbReference>
<dbReference type="PIRSF" id="PIRSF000463">
    <property type="entry name" value="GlgB"/>
    <property type="match status" value="1"/>
</dbReference>
<dbReference type="SMART" id="SM00642">
    <property type="entry name" value="Aamy"/>
    <property type="match status" value="1"/>
</dbReference>
<dbReference type="SUPFAM" id="SSF51445">
    <property type="entry name" value="(Trans)glycosidases"/>
    <property type="match status" value="1"/>
</dbReference>
<dbReference type="SUPFAM" id="SSF81296">
    <property type="entry name" value="E set domains"/>
    <property type="match status" value="1"/>
</dbReference>
<dbReference type="SUPFAM" id="SSF51011">
    <property type="entry name" value="Glycosyl hydrolase domain"/>
    <property type="match status" value="1"/>
</dbReference>
<reference key="1">
    <citation type="submission" date="2006-02" db="EMBL/GenBank/DDBJ databases">
        <title>Complete sequence of chromosome of Jannaschia sp. CCS1.</title>
        <authorList>
            <consortium name="US DOE Joint Genome Institute"/>
            <person name="Copeland A."/>
            <person name="Lucas S."/>
            <person name="Lapidus A."/>
            <person name="Barry K."/>
            <person name="Detter J.C."/>
            <person name="Glavina del Rio T."/>
            <person name="Hammon N."/>
            <person name="Israni S."/>
            <person name="Pitluck S."/>
            <person name="Brettin T."/>
            <person name="Bruce D."/>
            <person name="Han C."/>
            <person name="Tapia R."/>
            <person name="Gilna P."/>
            <person name="Chertkov O."/>
            <person name="Saunders E."/>
            <person name="Schmutz J."/>
            <person name="Larimer F."/>
            <person name="Land M."/>
            <person name="Kyrpides N."/>
            <person name="Lykidis A."/>
            <person name="Moran M.A."/>
            <person name="Belas R."/>
            <person name="Ye W."/>
            <person name="Buchan A."/>
            <person name="Gonzalez J.M."/>
            <person name="Schell M.A."/>
            <person name="Richardson P."/>
        </authorList>
    </citation>
    <scope>NUCLEOTIDE SEQUENCE [LARGE SCALE GENOMIC DNA]</scope>
    <source>
        <strain>CCS1</strain>
    </source>
</reference>
<organism>
    <name type="scientific">Jannaschia sp. (strain CCS1)</name>
    <dbReference type="NCBI Taxonomy" id="290400"/>
    <lineage>
        <taxon>Bacteria</taxon>
        <taxon>Pseudomonadati</taxon>
        <taxon>Pseudomonadota</taxon>
        <taxon>Alphaproteobacteria</taxon>
        <taxon>Rhodobacterales</taxon>
        <taxon>Roseobacteraceae</taxon>
        <taxon>Jannaschia</taxon>
    </lineage>
</organism>
<comment type="function">
    <text evidence="1">Catalyzes the formation of the alpha-1,6-glucosidic linkages in glycogen by scission of a 1,4-alpha-linked oligosaccharide from growing alpha-1,4-glucan chains and the subsequent attachment of the oligosaccharide to the alpha-1,6 position.</text>
</comment>
<comment type="catalytic activity">
    <reaction evidence="1">
        <text>Transfers a segment of a (1-&gt;4)-alpha-D-glucan chain to a primary hydroxy group in a similar glucan chain.</text>
        <dbReference type="EC" id="2.4.1.18"/>
    </reaction>
</comment>
<comment type="pathway">
    <text evidence="1">Glycan biosynthesis; glycogen biosynthesis.</text>
</comment>
<comment type="subunit">
    <text evidence="1">Monomer.</text>
</comment>
<comment type="similarity">
    <text evidence="1">Belongs to the glycosyl hydrolase 13 family. GlgB subfamily.</text>
</comment>
<comment type="sequence caution" evidence="2">
    <conflict type="erroneous initiation">
        <sequence resource="EMBL-CDS" id="ABD56030"/>
    </conflict>
</comment>
<evidence type="ECO:0000255" key="1">
    <source>
        <dbReference type="HAMAP-Rule" id="MF_00685"/>
    </source>
</evidence>
<evidence type="ECO:0000305" key="2"/>